<accession>P31022</accession>
<evidence type="ECO:0000250" key="1"/>
<evidence type="ECO:0000305" key="2"/>
<keyword id="KW-1003">Cell membrane</keyword>
<keyword id="KW-0342">GTP-binding</keyword>
<keyword id="KW-0449">Lipoprotein</keyword>
<keyword id="KW-0472">Membrane</keyword>
<keyword id="KW-0488">Methylation</keyword>
<keyword id="KW-0547">Nucleotide-binding</keyword>
<keyword id="KW-0636">Prenylation</keyword>
<keyword id="KW-0653">Protein transport</keyword>
<keyword id="KW-0813">Transport</keyword>
<sequence length="206" mass="23046">MPSRRRTLLKVIILGDSGVGKTSLMNQYVNKKFSNQYKATIGADFLTKEVQFEDRLFTLQIWDTAGQERFQSLGVAFYRGADCCVLVYDVNSVKSFDNLNNWREEFLIQANPSDPENFPFVVIGNKIDIDGGNSRVVSEKKARAWCAAKGNIPYFETSAKEGINVEEAFQTIAKDALKSGEEEELYLPDTIDVGNSSQPRSTGCEC</sequence>
<proteinExistence type="evidence at transcript level"/>
<organism>
    <name type="scientific">Pisum sativum</name>
    <name type="common">Garden pea</name>
    <name type="synonym">Lathyrus oleraceus</name>
    <dbReference type="NCBI Taxonomy" id="3888"/>
    <lineage>
        <taxon>Eukaryota</taxon>
        <taxon>Viridiplantae</taxon>
        <taxon>Streptophyta</taxon>
        <taxon>Embryophyta</taxon>
        <taxon>Tracheophyta</taxon>
        <taxon>Spermatophyta</taxon>
        <taxon>Magnoliopsida</taxon>
        <taxon>eudicotyledons</taxon>
        <taxon>Gunneridae</taxon>
        <taxon>Pentapetalae</taxon>
        <taxon>rosids</taxon>
        <taxon>fabids</taxon>
        <taxon>Fabales</taxon>
        <taxon>Fabaceae</taxon>
        <taxon>Papilionoideae</taxon>
        <taxon>50 kb inversion clade</taxon>
        <taxon>NPAAA clade</taxon>
        <taxon>Hologalegina</taxon>
        <taxon>IRL clade</taxon>
        <taxon>Fabeae</taxon>
        <taxon>Pisum</taxon>
    </lineage>
</organism>
<dbReference type="EMBL" id="X65650">
    <property type="protein sequence ID" value="CAA46600.1"/>
    <property type="molecule type" value="mRNA"/>
</dbReference>
<dbReference type="PIR" id="S33531">
    <property type="entry name" value="S33531"/>
</dbReference>
<dbReference type="RefSeq" id="NP_001414043.1">
    <property type="nucleotide sequence ID" value="NM_001427114.1"/>
</dbReference>
<dbReference type="SMR" id="P31022"/>
<dbReference type="EnsemblPlants" id="Psat7g141120.1">
    <property type="protein sequence ID" value="Psat7g141120.1.cds"/>
    <property type="gene ID" value="Psat7g141120"/>
</dbReference>
<dbReference type="GeneID" id="127108135"/>
<dbReference type="Gramene" id="Psat7g141120.1">
    <property type="protein sequence ID" value="Psat7g141120.1.cds"/>
    <property type="gene ID" value="Psat7g141120"/>
</dbReference>
<dbReference type="OrthoDB" id="1436450at2759"/>
<dbReference type="GO" id="GO:0005886">
    <property type="term" value="C:plasma membrane"/>
    <property type="evidence" value="ECO:0007669"/>
    <property type="project" value="UniProtKB-SubCell"/>
</dbReference>
<dbReference type="GO" id="GO:0005774">
    <property type="term" value="C:vacuolar membrane"/>
    <property type="evidence" value="ECO:0007669"/>
    <property type="project" value="TreeGrafter"/>
</dbReference>
<dbReference type="GO" id="GO:0005525">
    <property type="term" value="F:GTP binding"/>
    <property type="evidence" value="ECO:0007669"/>
    <property type="project" value="UniProtKB-KW"/>
</dbReference>
<dbReference type="GO" id="GO:0003924">
    <property type="term" value="F:GTPase activity"/>
    <property type="evidence" value="ECO:0007669"/>
    <property type="project" value="InterPro"/>
</dbReference>
<dbReference type="GO" id="GO:0015031">
    <property type="term" value="P:protein transport"/>
    <property type="evidence" value="ECO:0007669"/>
    <property type="project" value="UniProtKB-KW"/>
</dbReference>
<dbReference type="CDD" id="cd01862">
    <property type="entry name" value="Rab7"/>
    <property type="match status" value="1"/>
</dbReference>
<dbReference type="FunFam" id="3.40.50.300:FF:000295">
    <property type="entry name" value="Ras-related protein Rab7"/>
    <property type="match status" value="1"/>
</dbReference>
<dbReference type="Gene3D" id="3.40.50.300">
    <property type="entry name" value="P-loop containing nucleotide triphosphate hydrolases"/>
    <property type="match status" value="1"/>
</dbReference>
<dbReference type="InterPro" id="IPR027417">
    <property type="entry name" value="P-loop_NTPase"/>
</dbReference>
<dbReference type="InterPro" id="IPR005225">
    <property type="entry name" value="Small_GTP-bd"/>
</dbReference>
<dbReference type="InterPro" id="IPR001806">
    <property type="entry name" value="Small_GTPase"/>
</dbReference>
<dbReference type="NCBIfam" id="TIGR00231">
    <property type="entry name" value="small_GTP"/>
    <property type="match status" value="1"/>
</dbReference>
<dbReference type="PANTHER" id="PTHR47981">
    <property type="entry name" value="RAB FAMILY"/>
    <property type="match status" value="1"/>
</dbReference>
<dbReference type="PANTHER" id="PTHR47981:SF4">
    <property type="entry name" value="RAS-RELATED PROTEIN RABG3F"/>
    <property type="match status" value="1"/>
</dbReference>
<dbReference type="Pfam" id="PF00071">
    <property type="entry name" value="Ras"/>
    <property type="match status" value="1"/>
</dbReference>
<dbReference type="PRINTS" id="PR00449">
    <property type="entry name" value="RASTRNSFRMNG"/>
</dbReference>
<dbReference type="SMART" id="SM00175">
    <property type="entry name" value="RAB"/>
    <property type="match status" value="1"/>
</dbReference>
<dbReference type="SMART" id="SM00176">
    <property type="entry name" value="RAN"/>
    <property type="match status" value="1"/>
</dbReference>
<dbReference type="SMART" id="SM00173">
    <property type="entry name" value="RAS"/>
    <property type="match status" value="1"/>
</dbReference>
<dbReference type="SMART" id="SM00174">
    <property type="entry name" value="RHO"/>
    <property type="match status" value="1"/>
</dbReference>
<dbReference type="SUPFAM" id="SSF52540">
    <property type="entry name" value="P-loop containing nucleoside triphosphate hydrolases"/>
    <property type="match status" value="1"/>
</dbReference>
<dbReference type="PROSITE" id="PS51419">
    <property type="entry name" value="RAB"/>
    <property type="match status" value="1"/>
</dbReference>
<protein>
    <recommendedName>
        <fullName>Ras-related protein Rab7</fullName>
    </recommendedName>
</protein>
<reference key="1">
    <citation type="journal article" date="1993" name="Plant Mol. Biol.">
        <title>Sequence of a novel plant ras-related cDNA from Pisum sativum.</title>
        <authorList>
            <person name="Drew J.E."/>
            <person name="Bown D."/>
            <person name="Gatehouse J.A."/>
        </authorList>
    </citation>
    <scope>NUCLEOTIDE SEQUENCE [MRNA]</scope>
    <source>
        <strain>cv. Purple-podded</strain>
        <tissue>Pod</tissue>
    </source>
</reference>
<comment type="function">
    <text evidence="1">Protein transport. Probably involved in vesicular traffic (By similarity).</text>
</comment>
<comment type="subcellular location">
    <subcellularLocation>
        <location evidence="2">Cell membrane</location>
        <topology evidence="2">Lipid-anchor</topology>
        <orientation evidence="2">Cytoplasmic side</orientation>
    </subcellularLocation>
</comment>
<comment type="similarity">
    <text evidence="2">Belongs to the small GTPase superfamily. Rab family.</text>
</comment>
<feature type="chain" id="PRO_0000121283" description="Ras-related protein Rab7">
    <location>
        <begin position="1"/>
        <end position="206"/>
    </location>
</feature>
<feature type="binding site" evidence="1">
    <location>
        <begin position="15"/>
        <end position="22"/>
    </location>
    <ligand>
        <name>GTP</name>
        <dbReference type="ChEBI" id="CHEBI:37565"/>
    </ligand>
</feature>
<feature type="binding site" evidence="1">
    <location>
        <begin position="63"/>
        <end position="67"/>
    </location>
    <ligand>
        <name>GTP</name>
        <dbReference type="ChEBI" id="CHEBI:37565"/>
    </ligand>
</feature>
<feature type="binding site" evidence="1">
    <location>
        <begin position="125"/>
        <end position="128"/>
    </location>
    <ligand>
        <name>GTP</name>
        <dbReference type="ChEBI" id="CHEBI:37565"/>
    </ligand>
</feature>
<feature type="modified residue" description="Cysteine methyl ester" evidence="1">
    <location>
        <position position="206"/>
    </location>
</feature>
<feature type="lipid moiety-binding region" description="S-geranylgeranyl cysteine" evidence="1">
    <location>
        <position position="204"/>
    </location>
</feature>
<feature type="lipid moiety-binding region" description="S-geranylgeranyl cysteine" evidence="1">
    <location>
        <position position="206"/>
    </location>
</feature>
<name>RAB7_PEA</name>